<dbReference type="EC" id="7.5.2.6" evidence="1"/>
<dbReference type="EMBL" id="AE014299">
    <property type="protein sequence ID" value="AAN55824.1"/>
    <property type="molecule type" value="Genomic_DNA"/>
</dbReference>
<dbReference type="RefSeq" id="NP_718380.1">
    <property type="nucleotide sequence ID" value="NC_004347.2"/>
</dbReference>
<dbReference type="RefSeq" id="WP_011072735.1">
    <property type="nucleotide sequence ID" value="NC_004347.2"/>
</dbReference>
<dbReference type="SMR" id="Q8EDF0"/>
<dbReference type="STRING" id="211586.SO_2802"/>
<dbReference type="PaxDb" id="211586-SO_2802"/>
<dbReference type="KEGG" id="son:SO_2802"/>
<dbReference type="PATRIC" id="fig|211586.12.peg.2703"/>
<dbReference type="eggNOG" id="COG1132">
    <property type="taxonomic scope" value="Bacteria"/>
</dbReference>
<dbReference type="HOGENOM" id="CLU_000604_84_3_6"/>
<dbReference type="OrthoDB" id="9782586at2"/>
<dbReference type="PhylomeDB" id="Q8EDF0"/>
<dbReference type="BioCyc" id="SONE211586:G1GMP-2588-MONOMER"/>
<dbReference type="Proteomes" id="UP000008186">
    <property type="component" value="Chromosome"/>
</dbReference>
<dbReference type="GO" id="GO:0005886">
    <property type="term" value="C:plasma membrane"/>
    <property type="evidence" value="ECO:0007669"/>
    <property type="project" value="UniProtKB-SubCell"/>
</dbReference>
<dbReference type="GO" id="GO:0140359">
    <property type="term" value="F:ABC-type transporter activity"/>
    <property type="evidence" value="ECO:0007669"/>
    <property type="project" value="InterPro"/>
</dbReference>
<dbReference type="GO" id="GO:0005524">
    <property type="term" value="F:ATP binding"/>
    <property type="evidence" value="ECO:0007669"/>
    <property type="project" value="UniProtKB-KW"/>
</dbReference>
<dbReference type="GO" id="GO:0016887">
    <property type="term" value="F:ATP hydrolysis activity"/>
    <property type="evidence" value="ECO:0007669"/>
    <property type="project" value="InterPro"/>
</dbReference>
<dbReference type="GO" id="GO:0034040">
    <property type="term" value="F:ATPase-coupled lipid transmembrane transporter activity"/>
    <property type="evidence" value="ECO:0000318"/>
    <property type="project" value="GO_Central"/>
</dbReference>
<dbReference type="GO" id="GO:0055085">
    <property type="term" value="P:transmembrane transport"/>
    <property type="evidence" value="ECO:0000318"/>
    <property type="project" value="GO_Central"/>
</dbReference>
<dbReference type="CDD" id="cd18552">
    <property type="entry name" value="ABC_6TM_MsbA_like"/>
    <property type="match status" value="1"/>
</dbReference>
<dbReference type="FunFam" id="3.40.50.300:FF:000140">
    <property type="entry name" value="Lipid A export ATP-binding/permease protein MsbA"/>
    <property type="match status" value="1"/>
</dbReference>
<dbReference type="Gene3D" id="1.20.1560.10">
    <property type="entry name" value="ABC transporter type 1, transmembrane domain"/>
    <property type="match status" value="1"/>
</dbReference>
<dbReference type="Gene3D" id="3.40.50.300">
    <property type="entry name" value="P-loop containing nucleotide triphosphate hydrolases"/>
    <property type="match status" value="1"/>
</dbReference>
<dbReference type="InterPro" id="IPR003593">
    <property type="entry name" value="AAA+_ATPase"/>
</dbReference>
<dbReference type="InterPro" id="IPR011527">
    <property type="entry name" value="ABC1_TM_dom"/>
</dbReference>
<dbReference type="InterPro" id="IPR036640">
    <property type="entry name" value="ABC1_TM_sf"/>
</dbReference>
<dbReference type="InterPro" id="IPR003439">
    <property type="entry name" value="ABC_transporter-like_ATP-bd"/>
</dbReference>
<dbReference type="InterPro" id="IPR017871">
    <property type="entry name" value="ABC_transporter-like_CS"/>
</dbReference>
<dbReference type="InterPro" id="IPR011917">
    <property type="entry name" value="ABC_transpr_lipidA"/>
</dbReference>
<dbReference type="InterPro" id="IPR027417">
    <property type="entry name" value="P-loop_NTPase"/>
</dbReference>
<dbReference type="InterPro" id="IPR039421">
    <property type="entry name" value="Type_1_exporter"/>
</dbReference>
<dbReference type="NCBIfam" id="TIGR02203">
    <property type="entry name" value="MsbA_lipidA"/>
    <property type="match status" value="1"/>
</dbReference>
<dbReference type="PANTHER" id="PTHR43394:SF1">
    <property type="entry name" value="ATP-BINDING CASSETTE SUB-FAMILY B MEMBER 10, MITOCHONDRIAL"/>
    <property type="match status" value="1"/>
</dbReference>
<dbReference type="PANTHER" id="PTHR43394">
    <property type="entry name" value="ATP-DEPENDENT PERMEASE MDL1, MITOCHONDRIAL"/>
    <property type="match status" value="1"/>
</dbReference>
<dbReference type="Pfam" id="PF00664">
    <property type="entry name" value="ABC_membrane"/>
    <property type="match status" value="1"/>
</dbReference>
<dbReference type="Pfam" id="PF00005">
    <property type="entry name" value="ABC_tran"/>
    <property type="match status" value="1"/>
</dbReference>
<dbReference type="SMART" id="SM00382">
    <property type="entry name" value="AAA"/>
    <property type="match status" value="1"/>
</dbReference>
<dbReference type="SUPFAM" id="SSF90123">
    <property type="entry name" value="ABC transporter transmembrane region"/>
    <property type="match status" value="1"/>
</dbReference>
<dbReference type="SUPFAM" id="SSF52540">
    <property type="entry name" value="P-loop containing nucleoside triphosphate hydrolases"/>
    <property type="match status" value="1"/>
</dbReference>
<dbReference type="PROSITE" id="PS50929">
    <property type="entry name" value="ABC_TM1F"/>
    <property type="match status" value="1"/>
</dbReference>
<dbReference type="PROSITE" id="PS00211">
    <property type="entry name" value="ABC_TRANSPORTER_1"/>
    <property type="match status" value="1"/>
</dbReference>
<dbReference type="PROSITE" id="PS50893">
    <property type="entry name" value="ABC_TRANSPORTER_2"/>
    <property type="match status" value="1"/>
</dbReference>
<dbReference type="PROSITE" id="PS51239">
    <property type="entry name" value="MSBA"/>
    <property type="match status" value="1"/>
</dbReference>
<feature type="chain" id="PRO_0000092599" description="ATP-dependent lipid A-core flippase">
    <location>
        <begin position="1"/>
        <end position="601"/>
    </location>
</feature>
<feature type="transmembrane region" description="Helical" evidence="1">
    <location>
        <begin position="32"/>
        <end position="52"/>
    </location>
</feature>
<feature type="transmembrane region" description="Helical" evidence="1">
    <location>
        <begin position="81"/>
        <end position="101"/>
    </location>
</feature>
<feature type="transmembrane region" description="Helical" evidence="1">
    <location>
        <begin position="160"/>
        <end position="180"/>
    </location>
</feature>
<feature type="transmembrane region" description="Helical" evidence="1">
    <location>
        <begin position="183"/>
        <end position="203"/>
    </location>
</feature>
<feature type="transmembrane region" description="Helical" evidence="1">
    <location>
        <begin position="267"/>
        <end position="287"/>
    </location>
</feature>
<feature type="transmembrane region" description="Helical" evidence="1">
    <location>
        <begin position="296"/>
        <end position="316"/>
    </location>
</feature>
<feature type="domain" description="ABC transmembrane type-1" evidence="1">
    <location>
        <begin position="28"/>
        <end position="328"/>
    </location>
</feature>
<feature type="domain" description="ABC transporter" evidence="1">
    <location>
        <begin position="360"/>
        <end position="597"/>
    </location>
</feature>
<feature type="binding site" evidence="1">
    <location>
        <begin position="394"/>
        <end position="401"/>
    </location>
    <ligand>
        <name>ATP</name>
        <dbReference type="ChEBI" id="CHEBI:30616"/>
    </ligand>
</feature>
<accession>Q8EDF0</accession>
<keyword id="KW-0067">ATP-binding</keyword>
<keyword id="KW-0997">Cell inner membrane</keyword>
<keyword id="KW-1003">Cell membrane</keyword>
<keyword id="KW-0445">Lipid transport</keyword>
<keyword id="KW-0472">Membrane</keyword>
<keyword id="KW-0547">Nucleotide-binding</keyword>
<keyword id="KW-1185">Reference proteome</keyword>
<keyword id="KW-1278">Translocase</keyword>
<keyword id="KW-0812">Transmembrane</keyword>
<keyword id="KW-1133">Transmembrane helix</keyword>
<keyword id="KW-0813">Transport</keyword>
<sequence length="601" mass="65712">MTASPKNEMWTVFKRLMGYLKPMKGMFLLSVVGLIVYGLVDAAFISFIGPFIDKGFSSSAPAISNGIALPTSQGFHADNQVLLMAPIVVILMFSLRGFANFVSTYGISYMSARLIMDMRQQVFEHYLSLPVSYMDKENTGNLISKVTFDTEQIARASGSALISIVRDSVTIIGMLGLMFYNSWKLSLCILVIGPIMGVVITIVSRRFRKVSKQIQTAMGDVSAATEQMIKGHKNVLAFGGQETETARFAKINDRNRHQNMKLAVAQAVSQPLIMVIGSFALAFVLYAASLDSMKADLTAGTFATILGAMMAMLQPIKNLTRVNAEFQRGIAACTTVFELLDTVPESDTGTYTVARAKGNLRFDNVSFSYEGQERRALEKIDFEVSQGQTLALVGRSGSGKSTIASLVTRFYTGLESGDILLDDVSIYDYSLKSLRSQVALVSQQVTLFNDTIANNIAYAYPGEVTREQIIEAATLAHAMEFIEQLPDGLDTQVGENGVLLSGGQRQRIAIARAMLRDAPVLILDEATSALDTESEKAIQQGLDNLRQNRTSVVIAHRLSTIESADQILVVDQGRIVERGTHKSLLELGGMYAKLYQMQFGS</sequence>
<proteinExistence type="inferred from homology"/>
<comment type="function">
    <text evidence="1">Involved in lipopolysaccharide (LPS) biosynthesis. Translocates lipid A-core from the inner to the outer leaflet of the inner membrane. Transmembrane domains (TMD) form a pore in the inner membrane and the ATP-binding domain (NBD) is responsible for energy generation.</text>
</comment>
<comment type="catalytic activity">
    <reaction evidence="1">
        <text>ATP + H2O + lipid A-core oligosaccharideSide 1 = ADP + phosphate + lipid A-core oligosaccharideSide 2.</text>
        <dbReference type="EC" id="7.5.2.6"/>
    </reaction>
</comment>
<comment type="subunit">
    <text evidence="1">Homodimer.</text>
</comment>
<comment type="subcellular location">
    <subcellularLocation>
        <location evidence="1">Cell inner membrane</location>
        <topology evidence="1">Multi-pass membrane protein</topology>
    </subcellularLocation>
</comment>
<comment type="domain">
    <text evidence="1">In MsbA the ATP-binding domain (NBD) and the transmembrane domain (TMD) are fused.</text>
</comment>
<comment type="similarity">
    <text evidence="1">Belongs to the ABC transporter superfamily. Lipid exporter (TC 3.A.1.106) family.</text>
</comment>
<name>MSBA_SHEON</name>
<reference key="1">
    <citation type="journal article" date="2002" name="Nat. Biotechnol.">
        <title>Genome sequence of the dissimilatory metal ion-reducing bacterium Shewanella oneidensis.</title>
        <authorList>
            <person name="Heidelberg J.F."/>
            <person name="Paulsen I.T."/>
            <person name="Nelson K.E."/>
            <person name="Gaidos E.J."/>
            <person name="Nelson W.C."/>
            <person name="Read T.D."/>
            <person name="Eisen J.A."/>
            <person name="Seshadri R."/>
            <person name="Ward N.L."/>
            <person name="Methe B.A."/>
            <person name="Clayton R.A."/>
            <person name="Meyer T."/>
            <person name="Tsapin A."/>
            <person name="Scott J."/>
            <person name="Beanan M.J."/>
            <person name="Brinkac L.M."/>
            <person name="Daugherty S.C."/>
            <person name="DeBoy R.T."/>
            <person name="Dodson R.J."/>
            <person name="Durkin A.S."/>
            <person name="Haft D.H."/>
            <person name="Kolonay J.F."/>
            <person name="Madupu R."/>
            <person name="Peterson J.D."/>
            <person name="Umayam L.A."/>
            <person name="White O."/>
            <person name="Wolf A.M."/>
            <person name="Vamathevan J.J."/>
            <person name="Weidman J.F."/>
            <person name="Impraim M."/>
            <person name="Lee K."/>
            <person name="Berry K.J."/>
            <person name="Lee C."/>
            <person name="Mueller J."/>
            <person name="Khouri H.M."/>
            <person name="Gill J."/>
            <person name="Utterback T.R."/>
            <person name="McDonald L.A."/>
            <person name="Feldblyum T.V."/>
            <person name="Smith H.O."/>
            <person name="Venter J.C."/>
            <person name="Nealson K.H."/>
            <person name="Fraser C.M."/>
        </authorList>
    </citation>
    <scope>NUCLEOTIDE SEQUENCE [LARGE SCALE GENOMIC DNA]</scope>
    <source>
        <strain>ATCC 700550 / JCM 31522 / CIP 106686 / LMG 19005 / NCIMB 14063 / MR-1</strain>
    </source>
</reference>
<protein>
    <recommendedName>
        <fullName evidence="1">ATP-dependent lipid A-core flippase</fullName>
        <ecNumber evidence="1">7.5.2.6</ecNumber>
    </recommendedName>
    <alternativeName>
        <fullName evidence="1">Lipid A export ATP-binding/permease protein MsbA</fullName>
    </alternativeName>
</protein>
<gene>
    <name evidence="1" type="primary">msbA</name>
    <name type="ordered locus">SO_2802</name>
</gene>
<evidence type="ECO:0000255" key="1">
    <source>
        <dbReference type="HAMAP-Rule" id="MF_01703"/>
    </source>
</evidence>
<organism>
    <name type="scientific">Shewanella oneidensis (strain ATCC 700550 / JCM 31522 / CIP 106686 / LMG 19005 / NCIMB 14063 / MR-1)</name>
    <dbReference type="NCBI Taxonomy" id="211586"/>
    <lineage>
        <taxon>Bacteria</taxon>
        <taxon>Pseudomonadati</taxon>
        <taxon>Pseudomonadota</taxon>
        <taxon>Gammaproteobacteria</taxon>
        <taxon>Alteromonadales</taxon>
        <taxon>Shewanellaceae</taxon>
        <taxon>Shewanella</taxon>
    </lineage>
</organism>